<name>NRDR_PELUB</name>
<keyword id="KW-0067">ATP-binding</keyword>
<keyword id="KW-0238">DNA-binding</keyword>
<keyword id="KW-0479">Metal-binding</keyword>
<keyword id="KW-0547">Nucleotide-binding</keyword>
<keyword id="KW-1185">Reference proteome</keyword>
<keyword id="KW-0678">Repressor</keyword>
<keyword id="KW-0804">Transcription</keyword>
<keyword id="KW-0805">Transcription regulation</keyword>
<keyword id="KW-0862">Zinc</keyword>
<keyword id="KW-0863">Zinc-finger</keyword>
<dbReference type="EMBL" id="CP000084">
    <property type="protein sequence ID" value="AAZ21853.1"/>
    <property type="molecule type" value="Genomic_DNA"/>
</dbReference>
<dbReference type="RefSeq" id="WP_006996878.1">
    <property type="nucleotide sequence ID" value="NC_007205.1"/>
</dbReference>
<dbReference type="SMR" id="Q4FLT5"/>
<dbReference type="STRING" id="335992.SAR11_1047"/>
<dbReference type="GeneID" id="66295538"/>
<dbReference type="KEGG" id="pub:SAR11_1047"/>
<dbReference type="eggNOG" id="COG1327">
    <property type="taxonomic scope" value="Bacteria"/>
</dbReference>
<dbReference type="HOGENOM" id="CLU_108412_0_1_5"/>
<dbReference type="OrthoDB" id="9807461at2"/>
<dbReference type="Proteomes" id="UP000002528">
    <property type="component" value="Chromosome"/>
</dbReference>
<dbReference type="GO" id="GO:0005524">
    <property type="term" value="F:ATP binding"/>
    <property type="evidence" value="ECO:0007669"/>
    <property type="project" value="UniProtKB-KW"/>
</dbReference>
<dbReference type="GO" id="GO:0003677">
    <property type="term" value="F:DNA binding"/>
    <property type="evidence" value="ECO:0007669"/>
    <property type="project" value="UniProtKB-KW"/>
</dbReference>
<dbReference type="GO" id="GO:0008270">
    <property type="term" value="F:zinc ion binding"/>
    <property type="evidence" value="ECO:0007669"/>
    <property type="project" value="UniProtKB-KW"/>
</dbReference>
<dbReference type="GO" id="GO:0045892">
    <property type="term" value="P:negative regulation of DNA-templated transcription"/>
    <property type="evidence" value="ECO:0007669"/>
    <property type="project" value="UniProtKB-UniRule"/>
</dbReference>
<dbReference type="HAMAP" id="MF_00440">
    <property type="entry name" value="NrdR"/>
    <property type="match status" value="1"/>
</dbReference>
<dbReference type="InterPro" id="IPR005144">
    <property type="entry name" value="ATP-cone_dom"/>
</dbReference>
<dbReference type="InterPro" id="IPR055173">
    <property type="entry name" value="NrdR-like_N"/>
</dbReference>
<dbReference type="InterPro" id="IPR003796">
    <property type="entry name" value="RNR_NrdR-like"/>
</dbReference>
<dbReference type="NCBIfam" id="TIGR00244">
    <property type="entry name" value="transcriptional regulator NrdR"/>
    <property type="match status" value="1"/>
</dbReference>
<dbReference type="PANTHER" id="PTHR30455">
    <property type="entry name" value="TRANSCRIPTIONAL REPRESSOR NRDR"/>
    <property type="match status" value="1"/>
</dbReference>
<dbReference type="PANTHER" id="PTHR30455:SF2">
    <property type="entry name" value="TRANSCRIPTIONAL REPRESSOR NRDR"/>
    <property type="match status" value="1"/>
</dbReference>
<dbReference type="Pfam" id="PF03477">
    <property type="entry name" value="ATP-cone"/>
    <property type="match status" value="1"/>
</dbReference>
<dbReference type="Pfam" id="PF22811">
    <property type="entry name" value="Zn_ribbon_NrdR"/>
    <property type="match status" value="1"/>
</dbReference>
<dbReference type="PROSITE" id="PS51161">
    <property type="entry name" value="ATP_CONE"/>
    <property type="match status" value="1"/>
</dbReference>
<proteinExistence type="inferred from homology"/>
<evidence type="ECO:0000255" key="1">
    <source>
        <dbReference type="HAMAP-Rule" id="MF_00440"/>
    </source>
</evidence>
<protein>
    <recommendedName>
        <fullName evidence="1">Transcriptional repressor NrdR</fullName>
    </recommendedName>
</protein>
<gene>
    <name evidence="1" type="primary">nrdR</name>
    <name type="ordered locus">SAR11_1047</name>
</gene>
<sequence>MICSICKKGETSVVDSRPTEDGTAIRRRRLCVCGARFTTFERVQFREIMVVKKNGRKSSFDRDKLSKSIYIALKKRPIDTETAEKFISRTSRALEELGQSEISSNTIGTMVMEGLKDLDPVAYVRFASVYRNFREEKDFVQFVDKLDVYKKR</sequence>
<reference key="1">
    <citation type="journal article" date="2005" name="Science">
        <title>Genome streamlining in a cosmopolitan oceanic bacterium.</title>
        <authorList>
            <person name="Giovannoni S.J."/>
            <person name="Tripp H.J."/>
            <person name="Givan S."/>
            <person name="Podar M."/>
            <person name="Vergin K.L."/>
            <person name="Baptista D."/>
            <person name="Bibbs L."/>
            <person name="Eads J."/>
            <person name="Richardson T.H."/>
            <person name="Noordewier M."/>
            <person name="Rappe M.S."/>
            <person name="Short J.M."/>
            <person name="Carrington J.C."/>
            <person name="Mathur E.J."/>
        </authorList>
    </citation>
    <scope>NUCLEOTIDE SEQUENCE [LARGE SCALE GENOMIC DNA]</scope>
    <source>
        <strain>HTCC1062</strain>
    </source>
</reference>
<feature type="chain" id="PRO_0000249027" description="Transcriptional repressor NrdR">
    <location>
        <begin position="1"/>
        <end position="152"/>
    </location>
</feature>
<feature type="domain" description="ATP-cone" evidence="1">
    <location>
        <begin position="48"/>
        <end position="138"/>
    </location>
</feature>
<feature type="zinc finger region" evidence="1">
    <location>
        <begin position="3"/>
        <end position="33"/>
    </location>
</feature>
<accession>Q4FLT5</accession>
<organism>
    <name type="scientific">Pelagibacter ubique (strain HTCC1062)</name>
    <dbReference type="NCBI Taxonomy" id="335992"/>
    <lineage>
        <taxon>Bacteria</taxon>
        <taxon>Pseudomonadati</taxon>
        <taxon>Pseudomonadota</taxon>
        <taxon>Alphaproteobacteria</taxon>
        <taxon>Candidatus Pelagibacterales</taxon>
        <taxon>Candidatus Pelagibacteraceae</taxon>
        <taxon>Candidatus Pelagibacter</taxon>
    </lineage>
</organism>
<comment type="function">
    <text evidence="1">Negatively regulates transcription of bacterial ribonucleotide reductase nrd genes and operons by binding to NrdR-boxes.</text>
</comment>
<comment type="cofactor">
    <cofactor evidence="1">
        <name>Zn(2+)</name>
        <dbReference type="ChEBI" id="CHEBI:29105"/>
    </cofactor>
    <text evidence="1">Binds 1 zinc ion.</text>
</comment>
<comment type="similarity">
    <text evidence="1">Belongs to the NrdR family.</text>
</comment>